<proteinExistence type="inferred from homology"/>
<name>Y1810_ALIFM</name>
<reference key="1">
    <citation type="submission" date="2008-08" db="EMBL/GenBank/DDBJ databases">
        <title>Complete sequence of Vibrio fischeri strain MJ11.</title>
        <authorList>
            <person name="Mandel M.J."/>
            <person name="Stabb E.V."/>
            <person name="Ruby E.G."/>
            <person name="Ferriera S."/>
            <person name="Johnson J."/>
            <person name="Kravitz S."/>
            <person name="Beeson K."/>
            <person name="Sutton G."/>
            <person name="Rogers Y.-H."/>
            <person name="Friedman R."/>
            <person name="Frazier M."/>
            <person name="Venter J.C."/>
        </authorList>
    </citation>
    <scope>NUCLEOTIDE SEQUENCE [LARGE SCALE GENOMIC DNA]</scope>
    <source>
        <strain>MJ11</strain>
    </source>
</reference>
<accession>B5FFM5</accession>
<keyword id="KW-0963">Cytoplasm</keyword>
<keyword id="KW-0238">DNA-binding</keyword>
<dbReference type="EMBL" id="CP001139">
    <property type="protein sequence ID" value="ACH66468.1"/>
    <property type="molecule type" value="Genomic_DNA"/>
</dbReference>
<dbReference type="RefSeq" id="WP_005420010.1">
    <property type="nucleotide sequence ID" value="NC_011184.1"/>
</dbReference>
<dbReference type="SMR" id="B5FFM5"/>
<dbReference type="GeneID" id="54164380"/>
<dbReference type="KEGG" id="vfm:VFMJ11_1810"/>
<dbReference type="HOGENOM" id="CLU_140930_0_0_6"/>
<dbReference type="Proteomes" id="UP000001857">
    <property type="component" value="Chromosome I"/>
</dbReference>
<dbReference type="GO" id="GO:0043590">
    <property type="term" value="C:bacterial nucleoid"/>
    <property type="evidence" value="ECO:0007669"/>
    <property type="project" value="UniProtKB-UniRule"/>
</dbReference>
<dbReference type="GO" id="GO:0005829">
    <property type="term" value="C:cytosol"/>
    <property type="evidence" value="ECO:0007669"/>
    <property type="project" value="TreeGrafter"/>
</dbReference>
<dbReference type="GO" id="GO:0003677">
    <property type="term" value="F:DNA binding"/>
    <property type="evidence" value="ECO:0007669"/>
    <property type="project" value="UniProtKB-UniRule"/>
</dbReference>
<dbReference type="FunFam" id="3.30.1310.10:FF:000001">
    <property type="entry name" value="Nucleoid-associated protein YbaB"/>
    <property type="match status" value="1"/>
</dbReference>
<dbReference type="Gene3D" id="3.30.1310.10">
    <property type="entry name" value="Nucleoid-associated protein YbaB-like domain"/>
    <property type="match status" value="1"/>
</dbReference>
<dbReference type="HAMAP" id="MF_00274">
    <property type="entry name" value="DNA_YbaB_EbfC"/>
    <property type="match status" value="1"/>
</dbReference>
<dbReference type="InterPro" id="IPR036894">
    <property type="entry name" value="YbaB-like_sf"/>
</dbReference>
<dbReference type="InterPro" id="IPR004401">
    <property type="entry name" value="YbaB/EbfC"/>
</dbReference>
<dbReference type="NCBIfam" id="TIGR00103">
    <property type="entry name" value="DNA_YbaB_EbfC"/>
    <property type="match status" value="1"/>
</dbReference>
<dbReference type="PANTHER" id="PTHR33449">
    <property type="entry name" value="NUCLEOID-ASSOCIATED PROTEIN YBAB"/>
    <property type="match status" value="1"/>
</dbReference>
<dbReference type="PANTHER" id="PTHR33449:SF1">
    <property type="entry name" value="NUCLEOID-ASSOCIATED PROTEIN YBAB"/>
    <property type="match status" value="1"/>
</dbReference>
<dbReference type="Pfam" id="PF02575">
    <property type="entry name" value="YbaB_DNA_bd"/>
    <property type="match status" value="1"/>
</dbReference>
<dbReference type="PIRSF" id="PIRSF004555">
    <property type="entry name" value="UCP004555"/>
    <property type="match status" value="1"/>
</dbReference>
<dbReference type="SUPFAM" id="SSF82607">
    <property type="entry name" value="YbaB-like"/>
    <property type="match status" value="1"/>
</dbReference>
<gene>
    <name type="ordered locus">VFMJ11_1810</name>
</gene>
<organism>
    <name type="scientific">Aliivibrio fischeri (strain MJ11)</name>
    <name type="common">Vibrio fischeri</name>
    <dbReference type="NCBI Taxonomy" id="388396"/>
    <lineage>
        <taxon>Bacteria</taxon>
        <taxon>Pseudomonadati</taxon>
        <taxon>Pseudomonadota</taxon>
        <taxon>Gammaproteobacteria</taxon>
        <taxon>Vibrionales</taxon>
        <taxon>Vibrionaceae</taxon>
        <taxon>Aliivibrio</taxon>
    </lineage>
</organism>
<comment type="function">
    <text evidence="1">Binds to DNA and alters its conformation. May be involved in regulation of gene expression, nucleoid organization and DNA protection.</text>
</comment>
<comment type="subunit">
    <text evidence="1">Homodimer.</text>
</comment>
<comment type="subcellular location">
    <subcellularLocation>
        <location evidence="1">Cytoplasm</location>
        <location evidence="1">Nucleoid</location>
    </subcellularLocation>
</comment>
<comment type="similarity">
    <text evidence="1">Belongs to the YbaB/EbfC family.</text>
</comment>
<feature type="chain" id="PRO_1000114662" description="Nucleoid-associated protein VFMJ11_1810">
    <location>
        <begin position="1"/>
        <end position="111"/>
    </location>
</feature>
<feature type="region of interest" description="Disordered" evidence="2">
    <location>
        <begin position="1"/>
        <end position="23"/>
    </location>
</feature>
<feature type="region of interest" description="Disordered" evidence="2">
    <location>
        <begin position="89"/>
        <end position="111"/>
    </location>
</feature>
<sequence>MFGGKGGMGNLMKQAQQMQDRMQKMQEEIANMEVTGESGAGLVKVTITGSHSVRRVEIDPSLMEEDEKEMLEDLIAAAFNDASRRIEETQKEKMASVTGGMQMPPGFKMPF</sequence>
<evidence type="ECO:0000255" key="1">
    <source>
        <dbReference type="HAMAP-Rule" id="MF_00274"/>
    </source>
</evidence>
<evidence type="ECO:0000256" key="2">
    <source>
        <dbReference type="SAM" id="MobiDB-lite"/>
    </source>
</evidence>
<protein>
    <recommendedName>
        <fullName evidence="1">Nucleoid-associated protein VFMJ11_1810</fullName>
    </recommendedName>
</protein>